<sequence length="505" mass="59449">MAQIDFRKKINWHRRYRSPQGVKTEHEILRIFESDRGRIINSPAIRRLQQKTQVFPLERNAAVRTRLTHSMEVQQVGRYIAKEILSRMKELKLLEAYGLDELTGPFESIVEMSCLMHDIGNPPFGHFGEAAINDWFRQRLHPEDAESQPLTDDRCSVAALRLRDGEEPLNELRRKIRQDLCHFEGNAQGIRLVHTLMRMNLTWAQVGGILKYTRPAWWRGETPETHHYLMKKPGYYLSEEAYIARLRKELNLALYSRFPLTWIMEAADDISYCVADLEDAVEKRIFTVEQLYHHLHEAWGQHEKGSLFSLVVENAWEKSRSNSLSRSTEDQFFMYLRVNTLNKLVPYAAQRFIDNLPAIFAGTFNHALLEDASECSDLLKLYKNVAVKHVFSHPDVEQLELQGYRVISGLLEIYRPLLSLSLSDFTELVEKERVKRFPIESRLFHKLSTRHRLAYVEAVSKLPSDYPEFPLWEYYYRCRLLQDYISGMTDLYAWDEYRRLMAVEQ</sequence>
<reference key="1">
    <citation type="submission" date="2008-05" db="EMBL/GenBank/DDBJ databases">
        <title>Complete sequence of Shigella boydii serotype 18 strain BS512.</title>
        <authorList>
            <person name="Rasko D.A."/>
            <person name="Rosovitz M."/>
            <person name="Maurelli A.T."/>
            <person name="Myers G."/>
            <person name="Seshadri R."/>
            <person name="Cer R."/>
            <person name="Jiang L."/>
            <person name="Ravel J."/>
            <person name="Sebastian Y."/>
        </authorList>
    </citation>
    <scope>NUCLEOTIDE SEQUENCE [LARGE SCALE GENOMIC DNA]</scope>
    <source>
        <strain>CDC 3083-94 / BS512</strain>
    </source>
</reference>
<evidence type="ECO:0000255" key="1">
    <source>
        <dbReference type="HAMAP-Rule" id="MF_00030"/>
    </source>
</evidence>
<evidence type="ECO:0000255" key="2">
    <source>
        <dbReference type="PROSITE-ProRule" id="PRU01175"/>
    </source>
</evidence>
<comment type="function">
    <text evidence="1">dGTPase preferentially hydrolyzes dGTP over the other canonical NTPs.</text>
</comment>
<comment type="catalytic activity">
    <reaction evidence="1">
        <text>dGTP + H2O = 2'-deoxyguanosine + triphosphate + H(+)</text>
        <dbReference type="Rhea" id="RHEA:15193"/>
        <dbReference type="ChEBI" id="CHEBI:15377"/>
        <dbReference type="ChEBI" id="CHEBI:15378"/>
        <dbReference type="ChEBI" id="CHEBI:17172"/>
        <dbReference type="ChEBI" id="CHEBI:18036"/>
        <dbReference type="ChEBI" id="CHEBI:61429"/>
        <dbReference type="EC" id="3.1.5.1"/>
    </reaction>
</comment>
<comment type="cofactor">
    <cofactor evidence="1">
        <name>Mg(2+)</name>
        <dbReference type="ChEBI" id="CHEBI:18420"/>
    </cofactor>
</comment>
<comment type="subunit">
    <text evidence="1">Homotetramer.</text>
</comment>
<comment type="similarity">
    <text evidence="1">Belongs to the dGTPase family. Type 1 subfamily.</text>
</comment>
<protein>
    <recommendedName>
        <fullName evidence="1">Deoxyguanosinetriphosphate triphosphohydrolase</fullName>
        <shortName evidence="1">dGTP triphosphohydrolase</shortName>
        <shortName evidence="1">dGTPase</shortName>
        <ecNumber evidence="1">3.1.5.1</ecNumber>
    </recommendedName>
</protein>
<name>DGTP_SHIB3</name>
<accession>B2U304</accession>
<feature type="chain" id="PRO_1000090266" description="Deoxyguanosinetriphosphate triphosphohydrolase">
    <location>
        <begin position="1"/>
        <end position="505"/>
    </location>
</feature>
<feature type="domain" description="HD" evidence="2">
    <location>
        <begin position="66"/>
        <end position="273"/>
    </location>
</feature>
<gene>
    <name evidence="1" type="primary">dgt</name>
    <name type="ordered locus">SbBS512_E0152</name>
</gene>
<proteinExistence type="inferred from homology"/>
<dbReference type="EC" id="3.1.5.1" evidence="1"/>
<dbReference type="EMBL" id="CP001063">
    <property type="protein sequence ID" value="ACD09404.1"/>
    <property type="molecule type" value="Genomic_DNA"/>
</dbReference>
<dbReference type="RefSeq" id="WP_000057110.1">
    <property type="nucleotide sequence ID" value="NC_010658.1"/>
</dbReference>
<dbReference type="SMR" id="B2U304"/>
<dbReference type="STRING" id="344609.SbBS512_E0152"/>
<dbReference type="KEGG" id="sbc:SbBS512_E0152"/>
<dbReference type="HOGENOM" id="CLU_028163_2_1_6"/>
<dbReference type="Proteomes" id="UP000001030">
    <property type="component" value="Chromosome"/>
</dbReference>
<dbReference type="GO" id="GO:0008832">
    <property type="term" value="F:dGTPase activity"/>
    <property type="evidence" value="ECO:0007669"/>
    <property type="project" value="UniProtKB-UniRule"/>
</dbReference>
<dbReference type="GO" id="GO:0000287">
    <property type="term" value="F:magnesium ion binding"/>
    <property type="evidence" value="ECO:0007669"/>
    <property type="project" value="UniProtKB-UniRule"/>
</dbReference>
<dbReference type="GO" id="GO:0006203">
    <property type="term" value="P:dGTP catabolic process"/>
    <property type="evidence" value="ECO:0007669"/>
    <property type="project" value="InterPro"/>
</dbReference>
<dbReference type="CDD" id="cd00077">
    <property type="entry name" value="HDc"/>
    <property type="match status" value="1"/>
</dbReference>
<dbReference type="FunFam" id="1.10.3210.10:FF:000009">
    <property type="entry name" value="Deoxyguanosinetriphosphate triphosphohydrolase"/>
    <property type="match status" value="1"/>
</dbReference>
<dbReference type="FunFam" id="1.10.3210.10:FF:000010">
    <property type="entry name" value="Deoxyguanosinetriphosphate triphosphohydrolase"/>
    <property type="match status" value="1"/>
</dbReference>
<dbReference type="FunFam" id="1.10.3410.10:FF:000001">
    <property type="entry name" value="Deoxyguanosinetriphosphate triphosphohydrolase"/>
    <property type="match status" value="1"/>
</dbReference>
<dbReference type="Gene3D" id="1.10.3210.10">
    <property type="entry name" value="Hypothetical protein af1432"/>
    <property type="match status" value="2"/>
</dbReference>
<dbReference type="Gene3D" id="1.10.3410.10">
    <property type="entry name" value="putative deoxyguanosinetriphosphate triphosphohydrolase like domain"/>
    <property type="match status" value="1"/>
</dbReference>
<dbReference type="HAMAP" id="MF_00030">
    <property type="entry name" value="dGTPase_type1"/>
    <property type="match status" value="1"/>
</dbReference>
<dbReference type="InterPro" id="IPR023293">
    <property type="entry name" value="dGTP_triP_hydro_central_sf"/>
</dbReference>
<dbReference type="InterPro" id="IPR006261">
    <property type="entry name" value="dGTPase"/>
</dbReference>
<dbReference type="InterPro" id="IPR050135">
    <property type="entry name" value="dGTPase-like"/>
</dbReference>
<dbReference type="InterPro" id="IPR020779">
    <property type="entry name" value="dNTPase_1"/>
</dbReference>
<dbReference type="InterPro" id="IPR003607">
    <property type="entry name" value="HD/PDEase_dom"/>
</dbReference>
<dbReference type="InterPro" id="IPR006674">
    <property type="entry name" value="HD_domain"/>
</dbReference>
<dbReference type="NCBIfam" id="TIGR01353">
    <property type="entry name" value="dGTP_triPase"/>
    <property type="match status" value="1"/>
</dbReference>
<dbReference type="NCBIfam" id="NF003429">
    <property type="entry name" value="PRK04926.1"/>
    <property type="match status" value="1"/>
</dbReference>
<dbReference type="PANTHER" id="PTHR11373:SF32">
    <property type="entry name" value="DEOXYGUANOSINETRIPHOSPHATE TRIPHOSPHOHYDROLASE"/>
    <property type="match status" value="1"/>
</dbReference>
<dbReference type="PANTHER" id="PTHR11373">
    <property type="entry name" value="DEOXYNUCLEOSIDE TRIPHOSPHATE TRIPHOSPHOHYDROLASE"/>
    <property type="match status" value="1"/>
</dbReference>
<dbReference type="Pfam" id="PF01966">
    <property type="entry name" value="HD"/>
    <property type="match status" value="1"/>
</dbReference>
<dbReference type="SMART" id="SM00471">
    <property type="entry name" value="HDc"/>
    <property type="match status" value="1"/>
</dbReference>
<dbReference type="SUPFAM" id="SSF109604">
    <property type="entry name" value="HD-domain/PDEase-like"/>
    <property type="match status" value="1"/>
</dbReference>
<dbReference type="PROSITE" id="PS51831">
    <property type="entry name" value="HD"/>
    <property type="match status" value="1"/>
</dbReference>
<organism>
    <name type="scientific">Shigella boydii serotype 18 (strain CDC 3083-94 / BS512)</name>
    <dbReference type="NCBI Taxonomy" id="344609"/>
    <lineage>
        <taxon>Bacteria</taxon>
        <taxon>Pseudomonadati</taxon>
        <taxon>Pseudomonadota</taxon>
        <taxon>Gammaproteobacteria</taxon>
        <taxon>Enterobacterales</taxon>
        <taxon>Enterobacteriaceae</taxon>
        <taxon>Shigella</taxon>
    </lineage>
</organism>
<keyword id="KW-0378">Hydrolase</keyword>
<keyword id="KW-0460">Magnesium</keyword>
<keyword id="KW-1185">Reference proteome</keyword>